<dbReference type="EC" id="4.1.1.11" evidence="1"/>
<dbReference type="EMBL" id="CP001349">
    <property type="protein sequence ID" value="ACL60481.1"/>
    <property type="molecule type" value="Genomic_DNA"/>
</dbReference>
<dbReference type="RefSeq" id="WP_015932083.1">
    <property type="nucleotide sequence ID" value="NC_011894.1"/>
</dbReference>
<dbReference type="SMR" id="B8IQG9"/>
<dbReference type="STRING" id="460265.Mnod_5641"/>
<dbReference type="KEGG" id="mno:Mnod_5641"/>
<dbReference type="eggNOG" id="COG0853">
    <property type="taxonomic scope" value="Bacteria"/>
</dbReference>
<dbReference type="HOGENOM" id="CLU_115305_1_0_5"/>
<dbReference type="OrthoDB" id="9803983at2"/>
<dbReference type="UniPathway" id="UPA00028">
    <property type="reaction ID" value="UER00002"/>
</dbReference>
<dbReference type="Proteomes" id="UP000008207">
    <property type="component" value="Chromosome"/>
</dbReference>
<dbReference type="GO" id="GO:0005829">
    <property type="term" value="C:cytosol"/>
    <property type="evidence" value="ECO:0007669"/>
    <property type="project" value="TreeGrafter"/>
</dbReference>
<dbReference type="GO" id="GO:0004068">
    <property type="term" value="F:aspartate 1-decarboxylase activity"/>
    <property type="evidence" value="ECO:0007669"/>
    <property type="project" value="UniProtKB-UniRule"/>
</dbReference>
<dbReference type="GO" id="GO:0006523">
    <property type="term" value="P:alanine biosynthetic process"/>
    <property type="evidence" value="ECO:0007669"/>
    <property type="project" value="InterPro"/>
</dbReference>
<dbReference type="GO" id="GO:0015940">
    <property type="term" value="P:pantothenate biosynthetic process"/>
    <property type="evidence" value="ECO:0007669"/>
    <property type="project" value="UniProtKB-UniRule"/>
</dbReference>
<dbReference type="CDD" id="cd06919">
    <property type="entry name" value="Asp_decarbox"/>
    <property type="match status" value="1"/>
</dbReference>
<dbReference type="Gene3D" id="2.40.40.20">
    <property type="match status" value="1"/>
</dbReference>
<dbReference type="HAMAP" id="MF_00446">
    <property type="entry name" value="PanD"/>
    <property type="match status" value="1"/>
</dbReference>
<dbReference type="InterPro" id="IPR009010">
    <property type="entry name" value="Asp_de-COase-like_dom_sf"/>
</dbReference>
<dbReference type="InterPro" id="IPR003190">
    <property type="entry name" value="Asp_decarbox"/>
</dbReference>
<dbReference type="NCBIfam" id="TIGR00223">
    <property type="entry name" value="panD"/>
    <property type="match status" value="1"/>
</dbReference>
<dbReference type="PANTHER" id="PTHR21012">
    <property type="entry name" value="ASPARTATE 1-DECARBOXYLASE"/>
    <property type="match status" value="1"/>
</dbReference>
<dbReference type="PANTHER" id="PTHR21012:SF0">
    <property type="entry name" value="ASPARTATE 1-DECARBOXYLASE"/>
    <property type="match status" value="1"/>
</dbReference>
<dbReference type="Pfam" id="PF02261">
    <property type="entry name" value="Asp_decarbox"/>
    <property type="match status" value="1"/>
</dbReference>
<dbReference type="SUPFAM" id="SSF50692">
    <property type="entry name" value="ADC-like"/>
    <property type="match status" value="1"/>
</dbReference>
<gene>
    <name evidence="1" type="primary">panD</name>
    <name type="ordered locus">Mnod_5641</name>
</gene>
<accession>B8IQG9</accession>
<evidence type="ECO:0000255" key="1">
    <source>
        <dbReference type="HAMAP-Rule" id="MF_00446"/>
    </source>
</evidence>
<proteinExistence type="inferred from homology"/>
<reference key="1">
    <citation type="submission" date="2009-01" db="EMBL/GenBank/DDBJ databases">
        <title>Complete sequence of chromosome of Methylobacterium nodulans ORS 2060.</title>
        <authorList>
            <consortium name="US DOE Joint Genome Institute"/>
            <person name="Lucas S."/>
            <person name="Copeland A."/>
            <person name="Lapidus A."/>
            <person name="Glavina del Rio T."/>
            <person name="Dalin E."/>
            <person name="Tice H."/>
            <person name="Bruce D."/>
            <person name="Goodwin L."/>
            <person name="Pitluck S."/>
            <person name="Sims D."/>
            <person name="Brettin T."/>
            <person name="Detter J.C."/>
            <person name="Han C."/>
            <person name="Larimer F."/>
            <person name="Land M."/>
            <person name="Hauser L."/>
            <person name="Kyrpides N."/>
            <person name="Ivanova N."/>
            <person name="Marx C.J."/>
            <person name="Richardson P."/>
        </authorList>
    </citation>
    <scope>NUCLEOTIDE SEQUENCE [LARGE SCALE GENOMIC DNA]</scope>
    <source>
        <strain>LMG 21967 / CNCM I-2342 / ORS 2060</strain>
    </source>
</reference>
<name>PAND_METNO</name>
<keyword id="KW-0068">Autocatalytic cleavage</keyword>
<keyword id="KW-0963">Cytoplasm</keyword>
<keyword id="KW-0210">Decarboxylase</keyword>
<keyword id="KW-0456">Lyase</keyword>
<keyword id="KW-0566">Pantothenate biosynthesis</keyword>
<keyword id="KW-0670">Pyruvate</keyword>
<keyword id="KW-1185">Reference proteome</keyword>
<keyword id="KW-0704">Schiff base</keyword>
<keyword id="KW-0865">Zymogen</keyword>
<sequence>MRRIVAGKLHGIYVTDANLNYHGSITLDPDHCEEAGILPMEFVEIWNKNSGARISTYVILGERGSRCCILNGAAARTCQPGDQIIICNSIYIRESELPDIRPRVLTFDSDNRVLDRLEYIVKFDDFGRYRFAIERARSLNHASIAGEPKTVA</sequence>
<comment type="function">
    <text evidence="1">Catalyzes the pyruvoyl-dependent decarboxylation of aspartate to produce beta-alanine.</text>
</comment>
<comment type="catalytic activity">
    <reaction evidence="1">
        <text>L-aspartate + H(+) = beta-alanine + CO2</text>
        <dbReference type="Rhea" id="RHEA:19497"/>
        <dbReference type="ChEBI" id="CHEBI:15378"/>
        <dbReference type="ChEBI" id="CHEBI:16526"/>
        <dbReference type="ChEBI" id="CHEBI:29991"/>
        <dbReference type="ChEBI" id="CHEBI:57966"/>
        <dbReference type="EC" id="4.1.1.11"/>
    </reaction>
</comment>
<comment type="cofactor">
    <cofactor evidence="1">
        <name>pyruvate</name>
        <dbReference type="ChEBI" id="CHEBI:15361"/>
    </cofactor>
    <text evidence="1">Binds 1 pyruvoyl group covalently per subunit.</text>
</comment>
<comment type="pathway">
    <text evidence="1">Cofactor biosynthesis; (R)-pantothenate biosynthesis; beta-alanine from L-aspartate: step 1/1.</text>
</comment>
<comment type="subunit">
    <text evidence="1">Heterooctamer of four alpha and four beta subunits.</text>
</comment>
<comment type="subcellular location">
    <subcellularLocation>
        <location evidence="1">Cytoplasm</location>
    </subcellularLocation>
</comment>
<comment type="PTM">
    <text evidence="1">Is synthesized initially as an inactive proenzyme, which is activated by self-cleavage at a specific serine bond to produce a beta-subunit with a hydroxyl group at its C-terminus and an alpha-subunit with a pyruvoyl group at its N-terminus.</text>
</comment>
<comment type="similarity">
    <text evidence="1">Belongs to the PanD family.</text>
</comment>
<organism>
    <name type="scientific">Methylobacterium nodulans (strain LMG 21967 / CNCM I-2342 / ORS 2060)</name>
    <dbReference type="NCBI Taxonomy" id="460265"/>
    <lineage>
        <taxon>Bacteria</taxon>
        <taxon>Pseudomonadati</taxon>
        <taxon>Pseudomonadota</taxon>
        <taxon>Alphaproteobacteria</taxon>
        <taxon>Hyphomicrobiales</taxon>
        <taxon>Methylobacteriaceae</taxon>
        <taxon>Methylobacterium</taxon>
    </lineage>
</organism>
<feature type="chain" id="PRO_1000192011" description="Aspartate 1-decarboxylase beta chain" evidence="1">
    <location>
        <begin position="1"/>
        <end position="23"/>
    </location>
</feature>
<feature type="chain" id="PRO_1000192012" description="Aspartate 1-decarboxylase alpha chain" evidence="1">
    <location>
        <begin position="24"/>
        <end position="152"/>
    </location>
</feature>
<feature type="active site" description="Schiff-base intermediate with substrate; via pyruvic acid" evidence="1">
    <location>
        <position position="24"/>
    </location>
</feature>
<feature type="active site" description="Proton donor" evidence="1">
    <location>
        <position position="57"/>
    </location>
</feature>
<feature type="binding site" evidence="1">
    <location>
        <position position="56"/>
    </location>
    <ligand>
        <name>substrate</name>
    </ligand>
</feature>
<feature type="binding site" evidence="1">
    <location>
        <begin position="72"/>
        <end position="74"/>
    </location>
    <ligand>
        <name>substrate</name>
    </ligand>
</feature>
<feature type="modified residue" description="Pyruvic acid (Ser)" evidence="1">
    <location>
        <position position="24"/>
    </location>
</feature>
<protein>
    <recommendedName>
        <fullName evidence="1">Aspartate 1-decarboxylase</fullName>
        <ecNumber evidence="1">4.1.1.11</ecNumber>
    </recommendedName>
    <alternativeName>
        <fullName evidence="1">Aspartate alpha-decarboxylase</fullName>
    </alternativeName>
    <component>
        <recommendedName>
            <fullName evidence="1">Aspartate 1-decarboxylase beta chain</fullName>
        </recommendedName>
    </component>
    <component>
        <recommendedName>
            <fullName evidence="1">Aspartate 1-decarboxylase alpha chain</fullName>
        </recommendedName>
    </component>
</protein>